<sequence>MVHLGPKKPQARKGSMADVPKELMDEIHQLEDMFTVDSETLRKVVKHFIDELNKGLTKKGGNIPMIPGWVMEFPTGKESGNYLAIDLGGTNLRVVLVKLSGNHTFDTTQSKYKLPHDMRTTKHQEELWSFIADSLKDFMVEQELLNTKDTLPLGFTFSYPASQNKINEGILQRWTKGFDIPNVEGHDVVPLLQNEISKRELPIEIVALINDTVGTLIASYYTDPETKMGVIFGTGVNGAFYDVVSDIEKLEGKLADDIPSNSPMAINCEYGSFDNEHLVLPRTKYDVAVDEQSPRPGQQAFEKMTSGYYLGELLRLVLLELNEKGLMLKDQDLSKLKQPYIMDTSYPARIEDDPFENLEDTDDIFQKDFGVKTTLPERKLIRRLCELIGTRAARLAVCGIAAICQKRGYKTGHIAADGSVYNKYPGFKEAAAKGLRDIYGWTGDASKDPITIVPAEDGSGAGAAVIAALSEKRIAEGKSLGIIGA</sequence>
<comment type="function">
    <text evidence="5">Catalyzes the phosphorylation of hexose, such as D-glucose and D-fructose, to hexose 6-phosphate (D-glucose 6-phosphate and D-fructose 6-phosphate, respectively) (PubMed:332086). Mediates the initial step of glycolysis by catalyzing phosphorylation of D-glucose to D-glucose 6-phosphate (PubMed:332086).</text>
</comment>
<comment type="catalytic activity">
    <reaction evidence="7">
        <text>a D-hexose + ATP = a D-hexose 6-phosphate + ADP + H(+)</text>
        <dbReference type="Rhea" id="RHEA:22740"/>
        <dbReference type="ChEBI" id="CHEBI:4194"/>
        <dbReference type="ChEBI" id="CHEBI:15378"/>
        <dbReference type="ChEBI" id="CHEBI:30616"/>
        <dbReference type="ChEBI" id="CHEBI:229467"/>
        <dbReference type="ChEBI" id="CHEBI:456216"/>
        <dbReference type="EC" id="2.7.1.1"/>
    </reaction>
    <physiologicalReaction direction="left-to-right" evidence="7">
        <dbReference type="Rhea" id="RHEA:22741"/>
    </physiologicalReaction>
</comment>
<comment type="catalytic activity">
    <reaction evidence="7">
        <text>D-fructose + ATP = D-fructose 6-phosphate + ADP + H(+)</text>
        <dbReference type="Rhea" id="RHEA:16125"/>
        <dbReference type="ChEBI" id="CHEBI:15378"/>
        <dbReference type="ChEBI" id="CHEBI:30616"/>
        <dbReference type="ChEBI" id="CHEBI:37721"/>
        <dbReference type="ChEBI" id="CHEBI:61527"/>
        <dbReference type="ChEBI" id="CHEBI:456216"/>
        <dbReference type="EC" id="2.7.1.1"/>
    </reaction>
    <physiologicalReaction direction="left-to-right" evidence="7">
        <dbReference type="Rhea" id="RHEA:16126"/>
    </physiologicalReaction>
</comment>
<comment type="catalytic activity">
    <reaction evidence="7">
        <text>D-glucose + ATP = D-glucose 6-phosphate + ADP + H(+)</text>
        <dbReference type="Rhea" id="RHEA:17825"/>
        <dbReference type="ChEBI" id="CHEBI:4167"/>
        <dbReference type="ChEBI" id="CHEBI:15378"/>
        <dbReference type="ChEBI" id="CHEBI:30616"/>
        <dbReference type="ChEBI" id="CHEBI:61548"/>
        <dbReference type="ChEBI" id="CHEBI:456216"/>
        <dbReference type="EC" id="2.7.1.1"/>
    </reaction>
    <physiologicalReaction direction="left-to-right" evidence="7">
        <dbReference type="Rhea" id="RHEA:17826"/>
    </physiologicalReaction>
</comment>
<comment type="activity regulation">
    <text>Subject to allosteric control. Substrate inhibition by ATP.</text>
</comment>
<comment type="pathway">
    <text evidence="7">Carbohydrate metabolism; hexose metabolism.</text>
</comment>
<comment type="pathway">
    <text evidence="7">Carbohydrate degradation; glycolysis; D-glyceraldehyde 3-phosphate and glycerone phosphate from D-glucose: step 1/4.</text>
</comment>
<comment type="subunit">
    <text>Homodimer.</text>
</comment>
<comment type="interaction">
    <interactant intactId="EBI-8732">
        <id>P04806</id>
    </interactant>
    <interactant intactId="EBI-8738">
        <id>P04807</id>
        <label>HXK2</label>
    </interactant>
    <organismsDiffer>false</organismsDiffer>
    <experiments>3</experiments>
</comment>
<comment type="miscellaneous">
    <text>In yeast there are three glucose-phosphorylating isoenzymes, designated hexokinase I, II and glucokinase.</text>
</comment>
<comment type="miscellaneous">
    <text evidence="4">Present with 40800 molecules/cell in log phase SD medium.</text>
</comment>
<comment type="similarity">
    <text evidence="3 6">Belongs to the hexokinase family.</text>
</comment>
<comment type="online information" name="Worthington enzyme manual">
    <link uri="https://www.worthington-biochem.com/HK/"/>
</comment>
<reference key="1">
    <citation type="journal article" date="1986" name="Nucleic Acids Res.">
        <title>Identification, cloning and sequence determination of the genes specifying hexokinase A and B from yeast.</title>
        <authorList>
            <person name="Stachelek C."/>
            <person name="Stachelek J."/>
            <person name="Swan J."/>
            <person name="Botstein D."/>
            <person name="Konigsberg W."/>
        </authorList>
    </citation>
    <scope>NUCLEOTIDE SEQUENCE [GENOMIC DNA]</scope>
</reference>
<reference key="2">
    <citation type="journal article" date="1985" name="Gene">
        <title>Complete nucleotide sequence of the hexokinase PI gene (HXK1) of Saccharomyces cerevisiae.</title>
        <authorList>
            <person name="Kopetzki E."/>
            <person name="Entian K.-D."/>
            <person name="Mecke D."/>
        </authorList>
    </citation>
    <scope>NUCLEOTIDE SEQUENCE [MRNA]</scope>
</reference>
<reference key="3">
    <citation type="journal article" date="1995" name="Nat. Genet.">
        <title>Analysis of the nucleotide sequence of chromosome VI from Saccharomyces cerevisiae.</title>
        <authorList>
            <person name="Murakami Y."/>
            <person name="Naitou M."/>
            <person name="Hagiwara H."/>
            <person name="Shibata T."/>
            <person name="Ozawa M."/>
            <person name="Sasanuma S."/>
            <person name="Sasanuma M."/>
            <person name="Tsuchiya Y."/>
            <person name="Soeda E."/>
            <person name="Yokoyama K."/>
            <person name="Yamazaki M."/>
            <person name="Tashiro H."/>
            <person name="Eki T."/>
        </authorList>
    </citation>
    <scope>NUCLEOTIDE SEQUENCE [LARGE SCALE GENOMIC DNA]</scope>
    <source>
        <strain>ATCC 204508 / S288c</strain>
    </source>
</reference>
<reference key="4">
    <citation type="journal article" date="2014" name="G3 (Bethesda)">
        <title>The reference genome sequence of Saccharomyces cerevisiae: Then and now.</title>
        <authorList>
            <person name="Engel S.R."/>
            <person name="Dietrich F.S."/>
            <person name="Fisk D.G."/>
            <person name="Binkley G."/>
            <person name="Balakrishnan R."/>
            <person name="Costanzo M.C."/>
            <person name="Dwight S.S."/>
            <person name="Hitz B.C."/>
            <person name="Karra K."/>
            <person name="Nash R.S."/>
            <person name="Weng S."/>
            <person name="Wong E.D."/>
            <person name="Lloyd P."/>
            <person name="Skrzypek M.S."/>
            <person name="Miyasato S.R."/>
            <person name="Simison M."/>
            <person name="Cherry J.M."/>
        </authorList>
    </citation>
    <scope>GENOME REANNOTATION</scope>
    <source>
        <strain>ATCC 204508 / S288c</strain>
    </source>
</reference>
<reference key="5">
    <citation type="journal article" date="1996" name="Yeast">
        <title>Analysis of a 36.2 kb DNA sequence including the right telomere of chromosome VI from Saccharomyces cerevisiae.</title>
        <authorList>
            <person name="Eki T."/>
            <person name="Naitou M."/>
            <person name="Hagiwara H."/>
            <person name="Ozawa M."/>
            <person name="Sasanuma S."/>
            <person name="Sasanuma M."/>
            <person name="Tsuchiya Y."/>
            <person name="Shibata T."/>
            <person name="Hanaoka F."/>
            <person name="Murakami Y."/>
        </authorList>
    </citation>
    <scope>NUCLEOTIDE SEQUENCE [GENOMIC DNA]</scope>
    <source>
        <strain>ATCC 204511 / S288c / AB972</strain>
    </source>
</reference>
<reference key="6">
    <citation type="journal article" date="1977" name="Arch. Biochem. Biophys.">
        <title>Physiological role of glucose-phosphorylating enzymes in Saccharomyces cerevisiae.</title>
        <authorList>
            <person name="Lobo Z."/>
            <person name="Maitra P.K."/>
        </authorList>
    </citation>
    <scope>FUNCTION</scope>
    <scope>CATALYTIC ACTIVITY</scope>
</reference>
<reference key="7">
    <citation type="journal article" date="1988" name="J. Biol. Chem.">
        <title>The adenine nucleotide binding site on yeast hexokinase PII. Affinity labeling of Lys-111 by pyridoxal 5'-diphospho-5'-adenosine.</title>
        <authorList>
            <person name="Tamura J.K."/>
            <person name="Ladime J.R."/>
            <person name="Cross R.L."/>
        </authorList>
    </citation>
    <scope>ATP-BINDING</scope>
    <scope>PROTEIN SEQUENCE OF 104-112</scope>
</reference>
<reference key="8">
    <citation type="journal article" date="2003" name="Nature">
        <title>Global analysis of protein expression in yeast.</title>
        <authorList>
            <person name="Ghaemmaghami S."/>
            <person name="Huh W.-K."/>
            <person name="Bower K."/>
            <person name="Howson R.W."/>
            <person name="Belle A."/>
            <person name="Dephoure N."/>
            <person name="O'Shea E.K."/>
            <person name="Weissman J.S."/>
        </authorList>
    </citation>
    <scope>LEVEL OF PROTEIN EXPRESSION [LARGE SCALE ANALYSIS]</scope>
</reference>
<reference key="9">
    <citation type="journal article" date="2008" name="Mol. Cell. Proteomics">
        <title>A multidimensional chromatography technology for in-depth phosphoproteome analysis.</title>
        <authorList>
            <person name="Albuquerque C.P."/>
            <person name="Smolka M.B."/>
            <person name="Payne S.H."/>
            <person name="Bafna V."/>
            <person name="Eng J."/>
            <person name="Zhou H."/>
        </authorList>
    </citation>
    <scope>PHOSPHORYLATION [LARGE SCALE ANALYSIS] AT SER-245 AND SER-272</scope>
    <scope>IDENTIFICATION BY MASS SPECTROMETRY [LARGE SCALE ANALYSIS]</scope>
</reference>
<reference key="10">
    <citation type="journal article" date="2009" name="Science">
        <title>Global analysis of Cdk1 substrate phosphorylation sites provides insights into evolution.</title>
        <authorList>
            <person name="Holt L.J."/>
            <person name="Tuch B.B."/>
            <person name="Villen J."/>
            <person name="Johnson A.D."/>
            <person name="Gygi S.P."/>
            <person name="Morgan D.O."/>
        </authorList>
    </citation>
    <scope>IDENTIFICATION BY MASS SPECTROMETRY [LARGE SCALE ANALYSIS]</scope>
</reference>
<reference key="11">
    <citation type="journal article" date="1980" name="J. Mol. Biol.">
        <title>Structure of a complex between yeast hexokinase A and glucose. I. Structure determination and refinement at 3.5-A resolution.</title>
        <authorList>
            <person name="Bennett W.S. Jr."/>
            <person name="Steitz T.A."/>
        </authorList>
    </citation>
    <scope>X-RAY CRYSTALLOGRAPHY (3.5 ANGSTROMS)</scope>
</reference>
<evidence type="ECO:0000250" key="1"/>
<evidence type="ECO:0000255" key="2"/>
<evidence type="ECO:0000255" key="3">
    <source>
        <dbReference type="PROSITE-ProRule" id="PRU01084"/>
    </source>
</evidence>
<evidence type="ECO:0000269" key="4">
    <source>
    </source>
</evidence>
<evidence type="ECO:0000269" key="5">
    <source>
    </source>
</evidence>
<evidence type="ECO:0000305" key="6"/>
<evidence type="ECO:0000305" key="7">
    <source>
    </source>
</evidence>
<evidence type="ECO:0007744" key="8">
    <source>
    </source>
</evidence>
<evidence type="ECO:0007829" key="9">
    <source>
        <dbReference type="PDB" id="3B8A"/>
    </source>
</evidence>
<feature type="chain" id="PRO_0000197601" description="Hexokinase-1">
    <location>
        <begin position="1"/>
        <end position="485"/>
    </location>
</feature>
<feature type="domain" description="Hexokinase" evidence="3">
    <location>
        <begin position="21"/>
        <end position="468"/>
    </location>
</feature>
<feature type="region of interest" description="Hexokinase small subdomain" evidence="3">
    <location>
        <begin position="75"/>
        <end position="209"/>
    </location>
</feature>
<feature type="region of interest" description="Hexokinase large subdomain" evidence="3">
    <location>
        <begin position="210"/>
        <end position="457"/>
    </location>
</feature>
<feature type="binding site" evidence="1">
    <location>
        <begin position="86"/>
        <end position="91"/>
    </location>
    <ligand>
        <name>ATP</name>
        <dbReference type="ChEBI" id="CHEBI:30616"/>
    </ligand>
</feature>
<feature type="binding site" evidence="2">
    <location>
        <position position="111"/>
    </location>
    <ligand>
        <name>ATP</name>
        <dbReference type="ChEBI" id="CHEBI:30616"/>
    </ligand>
</feature>
<feature type="binding site">
    <location>
        <position position="158"/>
    </location>
    <ligand>
        <name>substrate</name>
    </ligand>
</feature>
<feature type="binding site">
    <location>
        <begin position="175"/>
        <end position="176"/>
    </location>
    <ligand>
        <name>substrate</name>
    </ligand>
</feature>
<feature type="binding site">
    <location>
        <begin position="210"/>
        <end position="211"/>
    </location>
    <ligand>
        <name>substrate</name>
    </ligand>
</feature>
<feature type="binding site">
    <location>
        <position position="237"/>
    </location>
    <ligand>
        <name>substrate</name>
    </ligand>
</feature>
<feature type="binding site">
    <location>
        <position position="269"/>
    </location>
    <ligand>
        <name>substrate</name>
    </ligand>
</feature>
<feature type="binding site">
    <location>
        <position position="302"/>
    </location>
    <ligand>
        <name>substrate</name>
    </ligand>
</feature>
<feature type="binding site" evidence="1">
    <location>
        <begin position="307"/>
        <end position="308"/>
    </location>
    <ligand>
        <name>ATP</name>
        <dbReference type="ChEBI" id="CHEBI:30616"/>
    </ligand>
</feature>
<feature type="binding site" evidence="1">
    <location>
        <begin position="344"/>
        <end position="348"/>
    </location>
    <ligand>
        <name>ATP</name>
        <dbReference type="ChEBI" id="CHEBI:30616"/>
    </ligand>
</feature>
<feature type="binding site" evidence="1">
    <location>
        <begin position="419"/>
        <end position="423"/>
    </location>
    <ligand>
        <name>ATP</name>
        <dbReference type="ChEBI" id="CHEBI:30616"/>
    </ligand>
</feature>
<feature type="modified residue" description="Phosphoserine" evidence="8">
    <location>
        <position position="245"/>
    </location>
</feature>
<feature type="modified residue" description="Phosphoserine" evidence="8">
    <location>
        <position position="272"/>
    </location>
</feature>
<feature type="sequence conflict" description="In Ref. 1; CAA27202." evidence="6" ref="1">
    <original>G</original>
    <variation>V</variation>
    <location>
        <position position="61"/>
    </location>
</feature>
<feature type="sequence conflict" description="In Ref. 1; CAA27202." evidence="6" ref="1">
    <original>H</original>
    <variation>R</variation>
    <location>
        <position position="103"/>
    </location>
</feature>
<feature type="sequence conflict" description="In Ref. 1; CAA27202." evidence="6" ref="1">
    <original>N</original>
    <variation>K</variation>
    <location>
        <position position="194"/>
    </location>
</feature>
<feature type="sequence conflict" description="In Ref. 1; CAA27202." evidence="6" ref="1">
    <original>V</original>
    <variation>C</variation>
    <location>
        <position position="244"/>
    </location>
</feature>
<feature type="sequence conflict" description="In Ref. 2; AAA34698." evidence="6" ref="2">
    <original>EN</original>
    <variation>VF</variation>
    <location>
        <begin position="356"/>
        <end position="357"/>
    </location>
</feature>
<feature type="sequence conflict" description="In Ref. 1; CAA27202." evidence="6" ref="1">
    <original>I</original>
    <variation>M</variation>
    <location>
        <position position="364"/>
    </location>
</feature>
<feature type="sequence conflict" description="In Ref. 2; AAA34698." evidence="6" ref="2">
    <original>I</original>
    <variation>T</variation>
    <location>
        <position position="388"/>
    </location>
</feature>
<feature type="sequence conflict" description="In Ref. 1; CAA27202." evidence="6" ref="1">
    <original>D</original>
    <variation>EN</variation>
    <location>
        <position position="444"/>
    </location>
</feature>
<feature type="sequence conflict" description="In Ref. 1; CAA27202." evidence="6" ref="1">
    <original>SL</original>
    <variation>VS</variation>
    <location>
        <begin position="479"/>
        <end position="480"/>
    </location>
</feature>
<feature type="helix" evidence="9">
    <location>
        <begin position="21"/>
        <end position="34"/>
    </location>
</feature>
<feature type="helix" evidence="9">
    <location>
        <begin position="38"/>
        <end position="54"/>
    </location>
</feature>
<feature type="strand" evidence="9">
    <location>
        <begin position="57"/>
        <end position="59"/>
    </location>
</feature>
<feature type="strand" evidence="9">
    <location>
        <begin position="80"/>
        <end position="87"/>
    </location>
</feature>
<feature type="strand" evidence="9">
    <location>
        <begin position="89"/>
        <end position="99"/>
    </location>
</feature>
<feature type="strand" evidence="9">
    <location>
        <begin position="101"/>
        <end position="113"/>
    </location>
</feature>
<feature type="helix" evidence="9">
    <location>
        <begin position="116"/>
        <end position="120"/>
    </location>
</feature>
<feature type="helix" evidence="9">
    <location>
        <begin position="125"/>
        <end position="141"/>
    </location>
</feature>
<feature type="strand" evidence="9">
    <location>
        <begin position="151"/>
        <end position="156"/>
    </location>
</feature>
<feature type="helix" evidence="9">
    <location>
        <begin position="181"/>
        <end position="183"/>
    </location>
</feature>
<feature type="helix" evidence="9">
    <location>
        <begin position="188"/>
        <end position="196"/>
    </location>
</feature>
<feature type="helix" evidence="9">
    <location>
        <begin position="197"/>
        <end position="199"/>
    </location>
</feature>
<feature type="strand" evidence="9">
    <location>
        <begin position="202"/>
        <end position="209"/>
    </location>
</feature>
<feature type="helix" evidence="9">
    <location>
        <begin position="211"/>
        <end position="220"/>
    </location>
</feature>
<feature type="strand" evidence="9">
    <location>
        <begin position="226"/>
        <end position="243"/>
    </location>
</feature>
<feature type="helix" evidence="9">
    <location>
        <begin position="244"/>
        <end position="246"/>
    </location>
</feature>
<feature type="helix" evidence="9">
    <location>
        <begin position="248"/>
        <end position="250"/>
    </location>
</feature>
<feature type="strand" evidence="9">
    <location>
        <begin position="263"/>
        <end position="267"/>
    </location>
</feature>
<feature type="helix" evidence="9">
    <location>
        <begin position="270"/>
        <end position="272"/>
    </location>
</feature>
<feature type="turn" evidence="9">
    <location>
        <begin position="273"/>
        <end position="276"/>
    </location>
</feature>
<feature type="strand" evidence="9">
    <location>
        <begin position="278"/>
        <end position="280"/>
    </location>
</feature>
<feature type="helix" evidence="9">
    <location>
        <begin position="284"/>
        <end position="292"/>
    </location>
</feature>
<feature type="strand" evidence="9">
    <location>
        <begin position="293"/>
        <end position="295"/>
    </location>
</feature>
<feature type="helix" evidence="9">
    <location>
        <begin position="300"/>
        <end position="303"/>
    </location>
</feature>
<feature type="helix" evidence="9">
    <location>
        <begin position="307"/>
        <end position="322"/>
    </location>
</feature>
<feature type="turn" evidence="9">
    <location>
        <begin position="323"/>
        <end position="325"/>
    </location>
</feature>
<feature type="strand" evidence="9">
    <location>
        <begin position="326"/>
        <end position="328"/>
    </location>
</feature>
<feature type="turn" evidence="9">
    <location>
        <begin position="334"/>
        <end position="337"/>
    </location>
</feature>
<feature type="helix" evidence="9">
    <location>
        <begin position="345"/>
        <end position="351"/>
    </location>
</feature>
<feature type="helix" evidence="9">
    <location>
        <begin position="359"/>
        <end position="367"/>
    </location>
</feature>
<feature type="helix" evidence="9">
    <location>
        <begin position="375"/>
        <end position="396"/>
    </location>
</feature>
<feature type="helix" evidence="9">
    <location>
        <begin position="398"/>
        <end position="406"/>
    </location>
</feature>
<feature type="strand" evidence="9">
    <location>
        <begin position="410"/>
        <end position="417"/>
    </location>
</feature>
<feature type="helix" evidence="9">
    <location>
        <begin position="419"/>
        <end position="423"/>
    </location>
</feature>
<feature type="helix" evidence="9">
    <location>
        <begin position="427"/>
        <end position="439"/>
    </location>
</feature>
<feature type="turn" evidence="9">
    <location>
        <begin position="444"/>
        <end position="446"/>
    </location>
</feature>
<feature type="strand" evidence="9">
    <location>
        <begin position="449"/>
        <end position="454"/>
    </location>
</feature>
<feature type="turn" evidence="9">
    <location>
        <begin position="458"/>
        <end position="460"/>
    </location>
</feature>
<feature type="helix" evidence="9">
    <location>
        <begin position="461"/>
        <end position="475"/>
    </location>
</feature>
<feature type="strand" evidence="9">
    <location>
        <begin position="480"/>
        <end position="482"/>
    </location>
</feature>
<dbReference type="EC" id="2.7.1.1" evidence="7"/>
<dbReference type="EMBL" id="M14410">
    <property type="protein sequence ID" value="AAA34698.1"/>
    <property type="molecule type" value="mRNA"/>
</dbReference>
<dbReference type="EMBL" id="X03482">
    <property type="protein sequence ID" value="CAA27202.1"/>
    <property type="molecule type" value="Genomic_DNA"/>
</dbReference>
<dbReference type="EMBL" id="D50617">
    <property type="protein sequence ID" value="BAA09292.1"/>
    <property type="molecule type" value="Genomic_DNA"/>
</dbReference>
<dbReference type="EMBL" id="BK006940">
    <property type="protein sequence ID" value="DAA12496.1"/>
    <property type="molecule type" value="Genomic_DNA"/>
</dbReference>
<dbReference type="PIR" id="S56308">
    <property type="entry name" value="KIBYHA"/>
</dbReference>
<dbReference type="RefSeq" id="NP_116711.3">
    <property type="nucleotide sequence ID" value="NM_001180018.3"/>
</dbReference>
<dbReference type="PDB" id="1HKG">
    <property type="method" value="X-ray"/>
    <property type="resolution" value="3.50 A"/>
    <property type="chains" value="A=152-466"/>
</dbReference>
<dbReference type="PDB" id="3B8A">
    <property type="method" value="X-ray"/>
    <property type="resolution" value="2.95 A"/>
    <property type="chains" value="X=1-485"/>
</dbReference>
<dbReference type="PDBsum" id="1HKG"/>
<dbReference type="PDBsum" id="3B8A"/>
<dbReference type="SMR" id="P04806"/>
<dbReference type="BioGRID" id="31211">
    <property type="interactions" value="166"/>
</dbReference>
<dbReference type="DIP" id="DIP-5377N"/>
<dbReference type="FunCoup" id="P04806">
    <property type="interactions" value="1151"/>
</dbReference>
<dbReference type="IntAct" id="P04806">
    <property type="interactions" value="143"/>
</dbReference>
<dbReference type="MINT" id="P04806"/>
<dbReference type="STRING" id="4932.YFR053C"/>
<dbReference type="BindingDB" id="P04806"/>
<dbReference type="iPTMnet" id="P04806"/>
<dbReference type="PaxDb" id="4932-YFR053C"/>
<dbReference type="PeptideAtlas" id="P04806"/>
<dbReference type="TopDownProteomics" id="P04806"/>
<dbReference type="EnsemblFungi" id="YFR053C_mRNA">
    <property type="protein sequence ID" value="YFR053C"/>
    <property type="gene ID" value="YFR053C"/>
</dbReference>
<dbReference type="GeneID" id="850614"/>
<dbReference type="KEGG" id="sce:YFR053C"/>
<dbReference type="AGR" id="SGD:S000001949"/>
<dbReference type="SGD" id="S000001949">
    <property type="gene designation" value="HXK1"/>
</dbReference>
<dbReference type="VEuPathDB" id="FungiDB:YFR053C"/>
<dbReference type="eggNOG" id="KOG1369">
    <property type="taxonomic scope" value="Eukaryota"/>
</dbReference>
<dbReference type="GeneTree" id="ENSGT00950000182787"/>
<dbReference type="HOGENOM" id="CLU_014393_5_2_1"/>
<dbReference type="InParanoid" id="P04806"/>
<dbReference type="OMA" id="YHPNCRI"/>
<dbReference type="OrthoDB" id="419537at2759"/>
<dbReference type="BioCyc" id="MetaCyc:YFR053C-MONOMER"/>
<dbReference type="BioCyc" id="YEAST:YFR053C-MONOMER"/>
<dbReference type="BRENDA" id="2.7.1.1">
    <property type="organism ID" value="984"/>
</dbReference>
<dbReference type="Reactome" id="R-SCE-170822">
    <property type="pathway name" value="Regulation of Glucokinase by Glucokinase Regulatory Protein"/>
</dbReference>
<dbReference type="Reactome" id="R-SCE-446205">
    <property type="pathway name" value="Synthesis of GDP-mannose"/>
</dbReference>
<dbReference type="Reactome" id="R-SCE-6798695">
    <property type="pathway name" value="Neutrophil degranulation"/>
</dbReference>
<dbReference type="Reactome" id="R-SCE-70171">
    <property type="pathway name" value="Glycolysis"/>
</dbReference>
<dbReference type="SABIO-RK" id="P04806"/>
<dbReference type="UniPathway" id="UPA00109">
    <property type="reaction ID" value="UER00180"/>
</dbReference>
<dbReference type="UniPathway" id="UPA00242"/>
<dbReference type="BioGRID-ORCS" id="850614">
    <property type="hits" value="1 hit in 10 CRISPR screens"/>
</dbReference>
<dbReference type="ChiTaRS" id="HXK1">
    <property type="organism name" value="yeast"/>
</dbReference>
<dbReference type="EvolutionaryTrace" id="P04806"/>
<dbReference type="PRO" id="PR:P04806"/>
<dbReference type="Proteomes" id="UP000002311">
    <property type="component" value="Chromosome VI"/>
</dbReference>
<dbReference type="RNAct" id="P04806">
    <property type="molecule type" value="protein"/>
</dbReference>
<dbReference type="GO" id="GO:0005737">
    <property type="term" value="C:cytoplasm"/>
    <property type="evidence" value="ECO:0000314"/>
    <property type="project" value="SGD"/>
</dbReference>
<dbReference type="GO" id="GO:0005829">
    <property type="term" value="C:cytosol"/>
    <property type="evidence" value="ECO:0007005"/>
    <property type="project" value="SGD"/>
</dbReference>
<dbReference type="GO" id="GO:0005739">
    <property type="term" value="C:mitochondrion"/>
    <property type="evidence" value="ECO:0000314"/>
    <property type="project" value="SGD"/>
</dbReference>
<dbReference type="GO" id="GO:0005524">
    <property type="term" value="F:ATP binding"/>
    <property type="evidence" value="ECO:0007669"/>
    <property type="project" value="UniProtKB-KW"/>
</dbReference>
<dbReference type="GO" id="GO:0005536">
    <property type="term" value="F:D-glucose binding"/>
    <property type="evidence" value="ECO:0007669"/>
    <property type="project" value="InterPro"/>
</dbReference>
<dbReference type="GO" id="GO:0008865">
    <property type="term" value="F:fructokinase activity"/>
    <property type="evidence" value="ECO:0000318"/>
    <property type="project" value="GO_Central"/>
</dbReference>
<dbReference type="GO" id="GO:0004340">
    <property type="term" value="F:glucokinase activity"/>
    <property type="evidence" value="ECO:0000318"/>
    <property type="project" value="GO_Central"/>
</dbReference>
<dbReference type="GO" id="GO:0004396">
    <property type="term" value="F:hexokinase activity"/>
    <property type="evidence" value="ECO:0000314"/>
    <property type="project" value="SGD"/>
</dbReference>
<dbReference type="GO" id="GO:0019158">
    <property type="term" value="F:mannokinase activity"/>
    <property type="evidence" value="ECO:0000318"/>
    <property type="project" value="GO_Central"/>
</dbReference>
<dbReference type="GO" id="GO:0046323">
    <property type="term" value="P:D-glucose import"/>
    <property type="evidence" value="ECO:0000316"/>
    <property type="project" value="SGD"/>
</dbReference>
<dbReference type="GO" id="GO:1990539">
    <property type="term" value="P:fructose import across plasma membrane"/>
    <property type="evidence" value="ECO:0000316"/>
    <property type="project" value="SGD"/>
</dbReference>
<dbReference type="GO" id="GO:0006000">
    <property type="term" value="P:fructose metabolic process"/>
    <property type="evidence" value="ECO:0000315"/>
    <property type="project" value="SGD"/>
</dbReference>
<dbReference type="GO" id="GO:0051156">
    <property type="term" value="P:glucose 6-phosphate metabolic process"/>
    <property type="evidence" value="ECO:0000318"/>
    <property type="project" value="GO_Central"/>
</dbReference>
<dbReference type="GO" id="GO:0006006">
    <property type="term" value="P:glucose metabolic process"/>
    <property type="evidence" value="ECO:0000315"/>
    <property type="project" value="SGD"/>
</dbReference>
<dbReference type="GO" id="GO:0006096">
    <property type="term" value="P:glycolytic process"/>
    <property type="evidence" value="ECO:0000314"/>
    <property type="project" value="SGD"/>
</dbReference>
<dbReference type="GO" id="GO:0001678">
    <property type="term" value="P:intracellular glucose homeostasis"/>
    <property type="evidence" value="ECO:0000318"/>
    <property type="project" value="GO_Central"/>
</dbReference>
<dbReference type="GO" id="GO:0006013">
    <property type="term" value="P:mannose metabolic process"/>
    <property type="evidence" value="ECO:0000314"/>
    <property type="project" value="SGD"/>
</dbReference>
<dbReference type="CDD" id="cd24087">
    <property type="entry name" value="ASKHA_NBD_HK1-2_fungi"/>
    <property type="match status" value="1"/>
</dbReference>
<dbReference type="FunFam" id="1.10.287.1250:FF:000001">
    <property type="entry name" value="Phosphotransferase"/>
    <property type="match status" value="1"/>
</dbReference>
<dbReference type="FunFam" id="3.30.420.40:FF:000092">
    <property type="entry name" value="Phosphotransferase"/>
    <property type="match status" value="1"/>
</dbReference>
<dbReference type="FunFam" id="3.40.367.20:FF:000004">
    <property type="entry name" value="Phosphotransferase"/>
    <property type="match status" value="1"/>
</dbReference>
<dbReference type="Gene3D" id="1.10.287.1250">
    <property type="match status" value="1"/>
</dbReference>
<dbReference type="Gene3D" id="3.30.420.40">
    <property type="match status" value="1"/>
</dbReference>
<dbReference type="Gene3D" id="3.40.367.20">
    <property type="match status" value="1"/>
</dbReference>
<dbReference type="InterPro" id="IPR043129">
    <property type="entry name" value="ATPase_NBD"/>
</dbReference>
<dbReference type="InterPro" id="IPR001312">
    <property type="entry name" value="Hexokinase"/>
</dbReference>
<dbReference type="InterPro" id="IPR019807">
    <property type="entry name" value="Hexokinase_BS"/>
</dbReference>
<dbReference type="InterPro" id="IPR022673">
    <property type="entry name" value="Hexokinase_C"/>
</dbReference>
<dbReference type="InterPro" id="IPR022672">
    <property type="entry name" value="Hexokinase_N"/>
</dbReference>
<dbReference type="PANTHER" id="PTHR19443">
    <property type="entry name" value="HEXOKINASE"/>
    <property type="match status" value="1"/>
</dbReference>
<dbReference type="PANTHER" id="PTHR19443:SF16">
    <property type="entry name" value="HEXOKINASE TYPE 1-RELATED"/>
    <property type="match status" value="1"/>
</dbReference>
<dbReference type="Pfam" id="PF00349">
    <property type="entry name" value="Hexokinase_1"/>
    <property type="match status" value="1"/>
</dbReference>
<dbReference type="Pfam" id="PF03727">
    <property type="entry name" value="Hexokinase_2"/>
    <property type="match status" value="1"/>
</dbReference>
<dbReference type="PRINTS" id="PR00475">
    <property type="entry name" value="HEXOKINASE"/>
</dbReference>
<dbReference type="SUPFAM" id="SSF53067">
    <property type="entry name" value="Actin-like ATPase domain"/>
    <property type="match status" value="2"/>
</dbReference>
<dbReference type="PROSITE" id="PS00378">
    <property type="entry name" value="HEXOKINASE_1"/>
    <property type="match status" value="1"/>
</dbReference>
<dbReference type="PROSITE" id="PS51748">
    <property type="entry name" value="HEXOKINASE_2"/>
    <property type="match status" value="1"/>
</dbReference>
<proteinExistence type="evidence at protein level"/>
<organism>
    <name type="scientific">Saccharomyces cerevisiae (strain ATCC 204508 / S288c)</name>
    <name type="common">Baker's yeast</name>
    <dbReference type="NCBI Taxonomy" id="559292"/>
    <lineage>
        <taxon>Eukaryota</taxon>
        <taxon>Fungi</taxon>
        <taxon>Dikarya</taxon>
        <taxon>Ascomycota</taxon>
        <taxon>Saccharomycotina</taxon>
        <taxon>Saccharomycetes</taxon>
        <taxon>Saccharomycetales</taxon>
        <taxon>Saccharomycetaceae</taxon>
        <taxon>Saccharomyces</taxon>
    </lineage>
</organism>
<accession>P04806</accession>
<accession>D6VTT6</accession>
<gene>
    <name type="primary">HXK1</name>
    <name type="synonym">HKA</name>
    <name type="ordered locus">YFR053C</name>
</gene>
<keyword id="KW-0002">3D-structure</keyword>
<keyword id="KW-0021">Allosteric enzyme</keyword>
<keyword id="KW-0067">ATP-binding</keyword>
<keyword id="KW-0903">Direct protein sequencing</keyword>
<keyword id="KW-0324">Glycolysis</keyword>
<keyword id="KW-0418">Kinase</keyword>
<keyword id="KW-0547">Nucleotide-binding</keyword>
<keyword id="KW-0597">Phosphoprotein</keyword>
<keyword id="KW-1185">Reference proteome</keyword>
<keyword id="KW-0808">Transferase</keyword>
<protein>
    <recommendedName>
        <fullName>Hexokinase-1</fullName>
        <ecNumber evidence="7">2.7.1.1</ecNumber>
    </recommendedName>
    <alternativeName>
        <fullName>Hexokinase PI</fullName>
    </alternativeName>
    <alternativeName>
        <fullName>Hexokinase-A</fullName>
    </alternativeName>
</protein>
<name>HXKA_YEAST</name>